<dbReference type="EC" id="3.2.1.48"/>
<dbReference type="EC" id="3.2.1.10"/>
<dbReference type="EMBL" id="M14046">
    <property type="protein sequence ID" value="AAA31459.1"/>
    <property type="molecule type" value="mRNA"/>
</dbReference>
<dbReference type="PIR" id="A23945">
    <property type="entry name" value="A23945"/>
</dbReference>
<dbReference type="RefSeq" id="NP_001075735.1">
    <property type="nucleotide sequence ID" value="NM_001082266.1"/>
</dbReference>
<dbReference type="SMR" id="P07768"/>
<dbReference type="FunCoup" id="P07768">
    <property type="interactions" value="8"/>
</dbReference>
<dbReference type="STRING" id="9986.ENSOCUP00000003372"/>
<dbReference type="CAZy" id="GH31">
    <property type="family name" value="Glycoside Hydrolase Family 31"/>
</dbReference>
<dbReference type="GlyCosmos" id="P07768">
    <property type="glycosylation" value="17 sites, No reported glycans"/>
</dbReference>
<dbReference type="PaxDb" id="9986-ENSOCUP00000003372"/>
<dbReference type="GeneID" id="100009093"/>
<dbReference type="KEGG" id="ocu:100009093"/>
<dbReference type="CTD" id="6476"/>
<dbReference type="eggNOG" id="KOG1065">
    <property type="taxonomic scope" value="Eukaryota"/>
</dbReference>
<dbReference type="InParanoid" id="P07768"/>
<dbReference type="OrthoDB" id="1334205at2759"/>
<dbReference type="BRENDA" id="3.2.1.10">
    <property type="organism ID" value="1749"/>
</dbReference>
<dbReference type="Proteomes" id="UP000001811">
    <property type="component" value="Unplaced"/>
</dbReference>
<dbReference type="GO" id="GO:0016324">
    <property type="term" value="C:apical plasma membrane"/>
    <property type="evidence" value="ECO:0007669"/>
    <property type="project" value="UniProtKB-SubCell"/>
</dbReference>
<dbReference type="GO" id="GO:0004558">
    <property type="term" value="F:alpha-1,4-glucosidase activity"/>
    <property type="evidence" value="ECO:0007669"/>
    <property type="project" value="TreeGrafter"/>
</dbReference>
<dbReference type="GO" id="GO:0030246">
    <property type="term" value="F:carbohydrate binding"/>
    <property type="evidence" value="ECO:0007669"/>
    <property type="project" value="InterPro"/>
</dbReference>
<dbReference type="GO" id="GO:0004574">
    <property type="term" value="F:oligo-1,6-glucosidase activity"/>
    <property type="evidence" value="ECO:0007669"/>
    <property type="project" value="UniProtKB-EC"/>
</dbReference>
<dbReference type="GO" id="GO:0004575">
    <property type="term" value="F:sucrose alpha-glucosidase activity"/>
    <property type="evidence" value="ECO:0007669"/>
    <property type="project" value="UniProtKB-EC"/>
</dbReference>
<dbReference type="GO" id="GO:0005975">
    <property type="term" value="P:carbohydrate metabolic process"/>
    <property type="evidence" value="ECO:0007669"/>
    <property type="project" value="InterPro"/>
</dbReference>
<dbReference type="CDD" id="cd06602">
    <property type="entry name" value="GH31_MGAM_SI_GAA"/>
    <property type="match status" value="2"/>
</dbReference>
<dbReference type="CDD" id="cd14752">
    <property type="entry name" value="GH31_N"/>
    <property type="match status" value="2"/>
</dbReference>
<dbReference type="CDD" id="cd00111">
    <property type="entry name" value="Trefoil"/>
    <property type="match status" value="2"/>
</dbReference>
<dbReference type="FunFam" id="2.60.40.1180:FF:000001">
    <property type="entry name" value="Maltase-glucoamylase, intestinal"/>
    <property type="match status" value="2"/>
</dbReference>
<dbReference type="FunFam" id="2.60.40.1180:FF:000005">
    <property type="entry name" value="Maltase-glucoamylase, intestinal"/>
    <property type="match status" value="2"/>
</dbReference>
<dbReference type="FunFam" id="2.60.40.1760:FF:000001">
    <property type="entry name" value="Maltase-glucoamylase, intestinal"/>
    <property type="match status" value="2"/>
</dbReference>
<dbReference type="FunFam" id="3.20.20.80:FF:000016">
    <property type="entry name" value="Maltase-glucoamylase, intestinal"/>
    <property type="match status" value="2"/>
</dbReference>
<dbReference type="FunFam" id="4.10.110.10:FF:000003">
    <property type="entry name" value="Maltase-glucoamylase, intestinal"/>
    <property type="match status" value="1"/>
</dbReference>
<dbReference type="Gene3D" id="3.20.20.80">
    <property type="entry name" value="Glycosidases"/>
    <property type="match status" value="2"/>
</dbReference>
<dbReference type="Gene3D" id="2.60.40.1760">
    <property type="entry name" value="glycosyl hydrolase (family 31)"/>
    <property type="match status" value="2"/>
</dbReference>
<dbReference type="Gene3D" id="2.60.40.1180">
    <property type="entry name" value="Golgi alpha-mannosidase II"/>
    <property type="match status" value="4"/>
</dbReference>
<dbReference type="Gene3D" id="4.10.110.10">
    <property type="entry name" value="Spasmolytic Protein, domain 1"/>
    <property type="match status" value="2"/>
</dbReference>
<dbReference type="InterPro" id="IPR011013">
    <property type="entry name" value="Gal_mutarotase_sf_dom"/>
</dbReference>
<dbReference type="InterPro" id="IPR030458">
    <property type="entry name" value="Glyco_hydro_31_AS"/>
</dbReference>
<dbReference type="InterPro" id="IPR048395">
    <property type="entry name" value="Glyco_hydro_31_C"/>
</dbReference>
<dbReference type="InterPro" id="IPR030459">
    <property type="entry name" value="Glyco_hydro_31_CS"/>
</dbReference>
<dbReference type="InterPro" id="IPR025887">
    <property type="entry name" value="Glyco_hydro_31_N_dom"/>
</dbReference>
<dbReference type="InterPro" id="IPR000322">
    <property type="entry name" value="Glyco_hydro_31_TIM"/>
</dbReference>
<dbReference type="InterPro" id="IPR013780">
    <property type="entry name" value="Glyco_hydro_b"/>
</dbReference>
<dbReference type="InterPro" id="IPR017853">
    <property type="entry name" value="Glycoside_hydrolase_SF"/>
</dbReference>
<dbReference type="InterPro" id="IPR017957">
    <property type="entry name" value="P_trefoil_CS"/>
</dbReference>
<dbReference type="InterPro" id="IPR000519">
    <property type="entry name" value="P_trefoil_dom"/>
</dbReference>
<dbReference type="InterPro" id="IPR044913">
    <property type="entry name" value="P_trefoil_dom_sf"/>
</dbReference>
<dbReference type="PANTHER" id="PTHR22762">
    <property type="entry name" value="ALPHA-GLUCOSIDASE"/>
    <property type="match status" value="1"/>
</dbReference>
<dbReference type="PANTHER" id="PTHR22762:SF133">
    <property type="entry name" value="P-TYPE DOMAIN-CONTAINING PROTEIN"/>
    <property type="match status" value="1"/>
</dbReference>
<dbReference type="Pfam" id="PF13802">
    <property type="entry name" value="Gal_mutarotas_2"/>
    <property type="match status" value="2"/>
</dbReference>
<dbReference type="Pfam" id="PF01055">
    <property type="entry name" value="Glyco_hydro_31_2nd"/>
    <property type="match status" value="2"/>
</dbReference>
<dbReference type="Pfam" id="PF21365">
    <property type="entry name" value="Glyco_hydro_31_3rd"/>
    <property type="match status" value="2"/>
</dbReference>
<dbReference type="Pfam" id="PF00088">
    <property type="entry name" value="Trefoil"/>
    <property type="match status" value="2"/>
</dbReference>
<dbReference type="SMART" id="SM00018">
    <property type="entry name" value="PD"/>
    <property type="match status" value="2"/>
</dbReference>
<dbReference type="SUPFAM" id="SSF51445">
    <property type="entry name" value="(Trans)glycosidases"/>
    <property type="match status" value="2"/>
</dbReference>
<dbReference type="SUPFAM" id="SSF74650">
    <property type="entry name" value="Galactose mutarotase-like"/>
    <property type="match status" value="2"/>
</dbReference>
<dbReference type="SUPFAM" id="SSF51011">
    <property type="entry name" value="Glycosyl hydrolase domain"/>
    <property type="match status" value="2"/>
</dbReference>
<dbReference type="SUPFAM" id="SSF57492">
    <property type="entry name" value="Trefoil"/>
    <property type="match status" value="1"/>
</dbReference>
<dbReference type="PROSITE" id="PS00129">
    <property type="entry name" value="GLYCOSYL_HYDROL_F31_1"/>
    <property type="match status" value="2"/>
</dbReference>
<dbReference type="PROSITE" id="PS00707">
    <property type="entry name" value="GLYCOSYL_HYDROL_F31_2"/>
    <property type="match status" value="2"/>
</dbReference>
<dbReference type="PROSITE" id="PS00025">
    <property type="entry name" value="P_TREFOIL_1"/>
    <property type="match status" value="1"/>
</dbReference>
<dbReference type="PROSITE" id="PS51448">
    <property type="entry name" value="P_TREFOIL_2"/>
    <property type="match status" value="2"/>
</dbReference>
<proteinExistence type="evidence at protein level"/>
<protein>
    <recommendedName>
        <fullName>Sucrase-isomaltase, intestinal</fullName>
    </recommendedName>
    <component>
        <recommendedName>
            <fullName>Sucrase</fullName>
            <ecNumber>3.2.1.48</ecNumber>
        </recommendedName>
    </component>
    <component>
        <recommendedName>
            <fullName>Isomaltase</fullName>
            <ecNumber>3.2.1.10</ecNumber>
        </recommendedName>
    </component>
</protein>
<feature type="initiator methionine" description="Removed">
    <location>
        <position position="1"/>
    </location>
</feature>
<feature type="chain" id="PRO_0000018556" description="Sucrase-isomaltase, intestinal">
    <location>
        <begin position="2"/>
        <end position="1827"/>
    </location>
</feature>
<feature type="chain" id="PRO_0000018557" description="Isomaltase">
    <location>
        <begin position="2"/>
        <end position="1007"/>
    </location>
</feature>
<feature type="chain" id="PRO_0000018558" description="Sucrase">
    <location>
        <begin position="1008"/>
        <end position="1827"/>
    </location>
</feature>
<feature type="topological domain" description="Cytoplasmic" evidence="3">
    <location>
        <begin position="2"/>
        <end position="12"/>
    </location>
</feature>
<feature type="transmembrane region" description="Helical; Signal-anchor for type II membrane protein" evidence="3">
    <location>
        <begin position="13"/>
        <end position="32"/>
    </location>
</feature>
<feature type="topological domain" description="Lumenal" evidence="3">
    <location>
        <begin position="33"/>
        <end position="1827"/>
    </location>
</feature>
<feature type="domain" description="P-type 1" evidence="4">
    <location>
        <begin position="61"/>
        <end position="110"/>
    </location>
</feature>
<feature type="domain" description="P-type 2" evidence="4">
    <location>
        <begin position="932"/>
        <end position="978"/>
    </location>
</feature>
<feature type="region of interest" description="Disordered" evidence="5">
    <location>
        <begin position="39"/>
        <end position="64"/>
    </location>
</feature>
<feature type="region of interest" description="Isomaltase">
    <location>
        <begin position="110"/>
        <end position="1007"/>
    </location>
</feature>
<feature type="region of interest" description="Sucrase">
    <location>
        <begin position="1008"/>
        <end position="1827"/>
    </location>
</feature>
<feature type="compositionally biased region" description="Low complexity" evidence="5">
    <location>
        <begin position="43"/>
        <end position="64"/>
    </location>
</feature>
<feature type="active site" description="Nucleophile; for isomaltase activity">
    <location>
        <position position="505"/>
    </location>
</feature>
<feature type="active site" description="For isomaltase activity" evidence="1">
    <location>
        <position position="604"/>
    </location>
</feature>
<feature type="active site" description="Nucleophile; for sucrase activity">
    <location>
        <position position="1394"/>
    </location>
</feature>
<feature type="active site" description="For sucrase activity">
    <location>
        <position position="1397"/>
    </location>
</feature>
<feature type="active site" description="Proton donor; for sucrase activity" evidence="1">
    <location>
        <position position="1500"/>
    </location>
</feature>
<feature type="binding site" evidence="1">
    <location>
        <position position="264"/>
    </location>
    <ligand>
        <name>substrate</name>
    </ligand>
</feature>
<feature type="binding site" evidence="1">
    <location>
        <position position="388"/>
    </location>
    <ligand>
        <name>substrate</name>
    </ligand>
</feature>
<feature type="binding site" evidence="1">
    <location>
        <position position="588"/>
    </location>
    <ligand>
        <name>substrate</name>
    </ligand>
</feature>
<feature type="binding site" evidence="1">
    <location>
        <position position="662"/>
    </location>
    <ligand>
        <name>substrate</name>
    </ligand>
</feature>
<feature type="modified residue" description="Phosphoserine; by PKA" evidence="2">
    <location>
        <position position="7"/>
    </location>
</feature>
<feature type="modified residue" description="Sulfotyrosine" evidence="3">
    <location>
        <position position="391"/>
    </location>
</feature>
<feature type="modified residue" description="Sulfotyrosine" evidence="3">
    <location>
        <position position="400"/>
    </location>
</feature>
<feature type="modified residue" description="Sulfotyrosine" evidence="3">
    <location>
        <position position="1382"/>
    </location>
</feature>
<feature type="modified residue" description="Sulfotyrosine" evidence="3">
    <location>
        <position position="1385"/>
    </location>
</feature>
<feature type="glycosylation site" description="N-linked (GlcNAc...) asparagine" evidence="3">
    <location>
        <position position="99"/>
    </location>
</feature>
<feature type="glycosylation site" description="N-linked (GlcNAc...) asparagine" evidence="3">
    <location>
        <position position="455"/>
    </location>
</feature>
<feature type="glycosylation site" description="N-linked (GlcNAc...) asparagine" evidence="3">
    <location>
        <position position="859"/>
    </location>
</feature>
<feature type="glycosylation site" description="N-linked (GlcNAc...) asparagine" evidence="3">
    <location>
        <position position="896"/>
    </location>
</feature>
<feature type="glycosylation site" description="N-linked (GlcNAc...) asparagine" evidence="3">
    <location>
        <position position="904"/>
    </location>
</feature>
<feature type="glycosylation site" description="N-linked (GlcNAc...) asparagine" evidence="3">
    <location>
        <position position="1235"/>
    </location>
</feature>
<feature type="glycosylation site" description="N-linked (GlcNAc...) asparagine" evidence="3">
    <location>
        <position position="1303"/>
    </location>
</feature>
<feature type="glycosylation site" description="N-linked (GlcNAc...) asparagine" evidence="3">
    <location>
        <position position="1325"/>
    </location>
</feature>
<feature type="glycosylation site" description="N-linked (GlcNAc...) asparagine" evidence="3">
    <location>
        <position position="1340"/>
    </location>
</feature>
<feature type="glycosylation site" description="N-linked (GlcNAc...) asparagine" evidence="3">
    <location>
        <position position="1354"/>
    </location>
</feature>
<feature type="glycosylation site" description="N-linked (GlcNAc...) asparagine" evidence="3">
    <location>
        <position position="1368"/>
    </location>
</feature>
<feature type="glycosylation site" description="N-linked (GlcNAc...) asparagine" evidence="3">
    <location>
        <position position="1403"/>
    </location>
</feature>
<feature type="glycosylation site" description="N-linked (GlcNAc...) asparagine" evidence="3">
    <location>
        <position position="1535"/>
    </location>
</feature>
<feature type="glycosylation site" description="N-linked (GlcNAc...) asparagine" evidence="3">
    <location>
        <position position="1572"/>
    </location>
</feature>
<feature type="glycosylation site" description="N-linked (GlcNAc...) asparagine" evidence="3">
    <location>
        <position position="1748"/>
    </location>
</feature>
<feature type="glycosylation site" description="N-linked (GlcNAc...) asparagine" evidence="3">
    <location>
        <position position="1763"/>
    </location>
</feature>
<feature type="glycosylation site" description="N-linked (GlcNAc...) asparagine" evidence="3">
    <location>
        <position position="1799"/>
    </location>
</feature>
<feature type="disulfide bond" evidence="4">
    <location>
        <begin position="63"/>
        <end position="94"/>
    </location>
</feature>
<feature type="disulfide bond" evidence="4">
    <location>
        <begin position="77"/>
        <end position="93"/>
    </location>
</feature>
<feature type="disulfide bond" evidence="4">
    <location>
        <begin position="88"/>
        <end position="106"/>
    </location>
</feature>
<feature type="disulfide bond" evidence="4">
    <location>
        <begin position="520"/>
        <end position="545"/>
    </location>
</feature>
<feature type="disulfide bond" evidence="4">
    <location>
        <begin position="635"/>
        <end position="646"/>
    </location>
</feature>
<accession>P07768</accession>
<evidence type="ECO:0000250" key="1"/>
<evidence type="ECO:0000250" key="2">
    <source>
        <dbReference type="UniProtKB" id="P14410"/>
    </source>
</evidence>
<evidence type="ECO:0000255" key="3"/>
<evidence type="ECO:0000255" key="4">
    <source>
        <dbReference type="PROSITE-ProRule" id="PRU00779"/>
    </source>
</evidence>
<evidence type="ECO:0000256" key="5">
    <source>
        <dbReference type="SAM" id="MobiDB-lite"/>
    </source>
</evidence>
<evidence type="ECO:0000305" key="6"/>
<keyword id="KW-1003">Cell membrane</keyword>
<keyword id="KW-0903">Direct protein sequencing</keyword>
<keyword id="KW-1015">Disulfide bond</keyword>
<keyword id="KW-0325">Glycoprotein</keyword>
<keyword id="KW-0326">Glycosidase</keyword>
<keyword id="KW-0378">Hydrolase</keyword>
<keyword id="KW-0472">Membrane</keyword>
<keyword id="KW-0511">Multifunctional enzyme</keyword>
<keyword id="KW-0597">Phosphoprotein</keyword>
<keyword id="KW-1185">Reference proteome</keyword>
<keyword id="KW-0677">Repeat</keyword>
<keyword id="KW-0735">Signal-anchor</keyword>
<keyword id="KW-0765">Sulfation</keyword>
<keyword id="KW-0812">Transmembrane</keyword>
<keyword id="KW-1133">Transmembrane helix</keyword>
<reference key="1">
    <citation type="journal article" date="1986" name="Cell">
        <title>The sucrase-isomaltase complex: primary structure, membrane-orientation, and evolution of a stalked, intrinsic brush border protein.</title>
        <authorList>
            <person name="Hunziker W."/>
            <person name="Spiess M."/>
            <person name="Semenza G."/>
            <person name="Lodish H.F."/>
        </authorList>
    </citation>
    <scope>NUCLEOTIDE SEQUENCE [MRNA]</scope>
</reference>
<reference key="2">
    <citation type="journal article" date="1982" name="FEBS Lett.">
        <title>N-terminal sequences of pig intestinal sucrase-isomaltase and pro-sucrase-isomaltase. Implications for the biosynthesis and membrane insertion of pro-sucrase-isomaltase.</title>
        <authorList>
            <person name="Sjoestroem H."/>
            <person name="Noren O."/>
            <person name="Christiansen L.A."/>
            <person name="Wacker H."/>
            <person name="Spiess M."/>
            <person name="Bigler-Meier B."/>
            <person name="Rickli E.E."/>
            <person name="Semenza G."/>
        </authorList>
    </citation>
    <scope>PRELIMINARY PROTEIN SEQUENCE OF 2-38 AND 1008-1015</scope>
</reference>
<name>SUIS_RABIT</name>
<comment type="function">
    <text>Plays an important role in the final stage of carbohydrate digestion. Isomaltase activity is specific for both alpha-1,4- and alpha-1,6-oligosaccharides.</text>
</comment>
<comment type="catalytic activity">
    <reaction>
        <text>Hydrolysis of sucrose and maltose by an alpha-D-glucosidase-type action.</text>
        <dbReference type="EC" id="3.2.1.48"/>
    </reaction>
</comment>
<comment type="catalytic activity">
    <reaction>
        <text>Hydrolysis of (1-&gt;6)-alpha-D-glucosidic linkages in some oligosaccharides produced from starch and glycogen by alpha-amylase, and in isomaltose.</text>
        <dbReference type="EC" id="3.2.1.10"/>
    </reaction>
</comment>
<comment type="subunit">
    <text>The resulting sucrase and isomaltase subunits stay associated with one another in a complex by non-covalent linkages.</text>
</comment>
<comment type="subcellular location">
    <subcellularLocation>
        <location>Apical cell membrane</location>
        <topology>Single-pass type II membrane protein</topology>
    </subcellularLocation>
    <text>Brush border.</text>
</comment>
<comment type="PTM">
    <text>The precursor is proteolytically cleaved when exposed to pancreatic proteases in the intestinal lumen.</text>
</comment>
<comment type="PTM">
    <text>N- and O-glycosylated.</text>
</comment>
<comment type="PTM">
    <text evidence="1">Sulfated.</text>
</comment>
<comment type="miscellaneous">
    <text>There is a high degree of homology between the isomaltase and sucrase portions (41% of amino acid identity) indicating that this protein is evolved by partial gene duplication.</text>
</comment>
<comment type="similarity">
    <text evidence="6">Belongs to the glycosyl hydrolase 31 family.</text>
</comment>
<sequence length="1827" mass="210140">MAKRKFSGLEITLIVLFVIVFIIAIALIAVLATKTPAVEEVNPSSSTPTTTSTTTSTSGSVSCPSELNEVVNERINCIPEQSPTQAICAQRNCCWRPWNNSDIPWCFFVDNHGYNVEGMTTTSTGLEARLNRKSTPTLFGNDINNVLLTTESQTANRLRFKLTDPNNKRYEVPHQFVTEFAGPAATETLYDVQVTENPFSIKVIRKSNNRILFDSSIGPLVYSDQYLQISTRLPSEYMYGFGEHVHKRFRHDLYWKTWPIFTRDQHTDDNNNNLYGHQTFFMCIEDTTGKSFGVFLMNSNAMEIFIQPTPIVTYRVIGGILDFYIFLGDTPEQVVQQYQELIGRPAMPAYWSLGFQLSRWNYNSLDVVKEVVRRNREALIPFDTQVSDIDYMEDKKDFTYDRVAYNGLPDFVQDLHDHGQKYVIILDPAISINRRASGEAYESYDRGNAQNVWVNESDGTTPIVGEVWPGDTVYPDFTSPNCIEWWANECNIFHQEVNYDGLWIDMNEVSSFVQGSNKGCNDNTLNYPPYIPDIVDKLMYSKTLCMDSVQYWGKQYDVHSLYGYSMAIATERAVERVFPNKRSFILTRSTFAGSGRHAAHWLGDNTATWEQMEWSITGMLEFGLFGMPLVGADICGFLAETTEELCRRWMQLGAFYPFSRNHNADGFEHQDPAFFGQDSLLVKSSRHYLNIRYTLLPFLYTLFYKAHAFGETVARPVLHEFYEDTNSWVEDREFLWGPALLITPVLTQGAETVSAYIPDAVWYDYETGAKRPWRKQRVEMSLPADKIGLHLRGGYIIPIQQPAVTTTASRMNPLGLIIALNDDNTAVGDFFWDDGETKDTVQNDNYILYTFAVSNNNLNITCTHELYSEGTTLAFQTIKILGVTETVTQVTVAENNQSMSTHSNFTYDPSNQVLLIENLNFNLGRNFRVQWDQTFLESEKITCYPDADIATQEKCTQRGCIWDTNTVNPRAPECYFPKTDNPYSVSSTQYSPTGITADLQLNPTRTRITLPSEPITNLRVEVKYHKNDMVQFKIFDPQNKRYEVPVPLDIPATPTSTQENRLYDVEIKENPFGIQIRRRSTGKVIWDSCLPGFAFNDQFIQISTRLPSEYIYGFGEAEHTAFKRDLNWHTWGMFTRDQPPGYKLNSYGFHPYYMALEDEGNAHGVLLLNSNAMDVTFMPTPALTYRVIGGILDFYMFLGPTPEVATQQYHEVIGHPVMPPYWSLGFQLCRYGYRNTSEIIELYEGMVAADIPYDVQYTDIDYMERQLDFTIDENFRELPQFVDRIRGEGMRYIIILDPAISGNETRPYPAFDRGEAKDVFVKWPNTSDICWAKVWPDLPNITIDESLTEDEAVNASRAHAAFPDFFRNSTAEWWTREILDFYNNYMKFDGLWIDMNEPSSFVNGTTTNVCRNTELNYPPYFPELTKRTDGLHFRTMCMETEHILSDGSSVLHYDVHNLYGWSQAKPTYDALQKTTGKRGIVISRSTYPTAGRWAGHWLGDNYARWDNMDKSIIGMMEFSLFGISYTGADICGFFNDSEYHLCTRWTQLGAFYPFARNHNIQFTRRQDPVSWNQTFVEMTRNVLNIRYTLLPYFYTQLHEIHAHGGTVIRPLMHEFFDDRTTWDIFLQFLWGPAFMVTPVLEPYTTVVRGYVPNARWFDYHTGEDIGIRGQVQDLTLLMNAINLHVRGGHILPCQEPARTTFLSRQKYMKLIVAADDNHMAQGSLFWDDGDTIDTYERDLYLSVQFNLNKTTLTSTLLKTGYINKTEIRLGYVHVWGIGNTLINEVNLMYNEINYPLIFNQTQAQEILNIDLTAHEVTLDDPIEISWS</sequence>
<gene>
    <name type="primary">SI</name>
</gene>
<organism>
    <name type="scientific">Oryctolagus cuniculus</name>
    <name type="common">Rabbit</name>
    <dbReference type="NCBI Taxonomy" id="9986"/>
    <lineage>
        <taxon>Eukaryota</taxon>
        <taxon>Metazoa</taxon>
        <taxon>Chordata</taxon>
        <taxon>Craniata</taxon>
        <taxon>Vertebrata</taxon>
        <taxon>Euteleostomi</taxon>
        <taxon>Mammalia</taxon>
        <taxon>Eutheria</taxon>
        <taxon>Euarchontoglires</taxon>
        <taxon>Glires</taxon>
        <taxon>Lagomorpha</taxon>
        <taxon>Leporidae</taxon>
        <taxon>Oryctolagus</taxon>
    </lineage>
</organism>